<organism>
    <name type="scientific">Caldivirga maquilingensis (strain ATCC 700844 / DSM 13496 / JCM 10307 / IC-167)</name>
    <dbReference type="NCBI Taxonomy" id="397948"/>
    <lineage>
        <taxon>Archaea</taxon>
        <taxon>Thermoproteota</taxon>
        <taxon>Thermoprotei</taxon>
        <taxon>Thermoproteales</taxon>
        <taxon>Thermoproteaceae</taxon>
        <taxon>Caldivirga</taxon>
    </lineage>
</organism>
<feature type="chain" id="PRO_1000124675" description="3-phosphoshikimate 1-carboxyvinyltransferase">
    <location>
        <begin position="1"/>
        <end position="414"/>
    </location>
</feature>
<feature type="active site" description="Proton acceptor" evidence="1">
    <location>
        <position position="297"/>
    </location>
</feature>
<feature type="binding site" evidence="1">
    <location>
        <position position="20"/>
    </location>
    <ligand>
        <name>3-phosphoshikimate</name>
        <dbReference type="ChEBI" id="CHEBI:145989"/>
    </ligand>
</feature>
<feature type="binding site" evidence="1">
    <location>
        <position position="20"/>
    </location>
    <ligand>
        <name>phosphoenolpyruvate</name>
        <dbReference type="ChEBI" id="CHEBI:58702"/>
    </ligand>
</feature>
<feature type="binding site" evidence="1">
    <location>
        <position position="21"/>
    </location>
    <ligand>
        <name>3-phosphoshikimate</name>
        <dbReference type="ChEBI" id="CHEBI:145989"/>
    </ligand>
</feature>
<feature type="binding site" evidence="1">
    <location>
        <position position="25"/>
    </location>
    <ligand>
        <name>3-phosphoshikimate</name>
        <dbReference type="ChEBI" id="CHEBI:145989"/>
    </ligand>
</feature>
<feature type="binding site" evidence="1">
    <location>
        <position position="88"/>
    </location>
    <ligand>
        <name>phosphoenolpyruvate</name>
        <dbReference type="ChEBI" id="CHEBI:58702"/>
    </ligand>
</feature>
<feature type="binding site" evidence="1">
    <location>
        <position position="116"/>
    </location>
    <ligand>
        <name>phosphoenolpyruvate</name>
        <dbReference type="ChEBI" id="CHEBI:58702"/>
    </ligand>
</feature>
<feature type="binding site" evidence="1">
    <location>
        <position position="157"/>
    </location>
    <ligand>
        <name>3-phosphoshikimate</name>
        <dbReference type="ChEBI" id="CHEBI:145989"/>
    </ligand>
</feature>
<feature type="binding site" evidence="1">
    <location>
        <position position="158"/>
    </location>
    <ligand>
        <name>3-phosphoshikimate</name>
        <dbReference type="ChEBI" id="CHEBI:145989"/>
    </ligand>
</feature>
<feature type="binding site" evidence="1">
    <location>
        <position position="159"/>
    </location>
    <ligand>
        <name>3-phosphoshikimate</name>
        <dbReference type="ChEBI" id="CHEBI:145989"/>
    </ligand>
</feature>
<feature type="binding site" evidence="1">
    <location>
        <position position="159"/>
    </location>
    <ligand>
        <name>phosphoenolpyruvate</name>
        <dbReference type="ChEBI" id="CHEBI:58702"/>
    </ligand>
</feature>
<feature type="binding site" evidence="1">
    <location>
        <position position="183"/>
    </location>
    <ligand>
        <name>3-phosphoshikimate</name>
        <dbReference type="ChEBI" id="CHEBI:145989"/>
    </ligand>
</feature>
<feature type="binding site" evidence="1">
    <location>
        <position position="297"/>
    </location>
    <ligand>
        <name>3-phosphoshikimate</name>
        <dbReference type="ChEBI" id="CHEBI:145989"/>
    </ligand>
</feature>
<feature type="binding site" evidence="1">
    <location>
        <position position="324"/>
    </location>
    <ligand>
        <name>3-phosphoshikimate</name>
        <dbReference type="ChEBI" id="CHEBI:145989"/>
    </ligand>
</feature>
<feature type="binding site" evidence="1">
    <location>
        <position position="328"/>
    </location>
    <ligand>
        <name>phosphoenolpyruvate</name>
        <dbReference type="ChEBI" id="CHEBI:58702"/>
    </ligand>
</feature>
<feature type="binding site" evidence="1">
    <location>
        <position position="369"/>
    </location>
    <ligand>
        <name>phosphoenolpyruvate</name>
        <dbReference type="ChEBI" id="CHEBI:58702"/>
    </ligand>
</feature>
<feature type="binding site" evidence="1">
    <location>
        <position position="395"/>
    </location>
    <ligand>
        <name>phosphoenolpyruvate</name>
        <dbReference type="ChEBI" id="CHEBI:58702"/>
    </ligand>
</feature>
<gene>
    <name evidence="1" type="primary">aroA</name>
    <name type="ordered locus">Cmaq_1850</name>
</gene>
<dbReference type="EC" id="2.5.1.19" evidence="1"/>
<dbReference type="EMBL" id="CP000852">
    <property type="protein sequence ID" value="ABW02667.1"/>
    <property type="molecule type" value="Genomic_DNA"/>
</dbReference>
<dbReference type="RefSeq" id="WP_012186886.1">
    <property type="nucleotide sequence ID" value="NC_009954.1"/>
</dbReference>
<dbReference type="SMR" id="A8MB38"/>
<dbReference type="STRING" id="397948.Cmaq_1850"/>
<dbReference type="GeneID" id="5709596"/>
<dbReference type="KEGG" id="cma:Cmaq_1850"/>
<dbReference type="eggNOG" id="arCOG04134">
    <property type="taxonomic scope" value="Archaea"/>
</dbReference>
<dbReference type="HOGENOM" id="CLU_024321_0_0_2"/>
<dbReference type="OrthoDB" id="43788at2157"/>
<dbReference type="UniPathway" id="UPA00053"/>
<dbReference type="Proteomes" id="UP000001137">
    <property type="component" value="Chromosome"/>
</dbReference>
<dbReference type="GO" id="GO:0005737">
    <property type="term" value="C:cytoplasm"/>
    <property type="evidence" value="ECO:0007669"/>
    <property type="project" value="UniProtKB-SubCell"/>
</dbReference>
<dbReference type="GO" id="GO:0003866">
    <property type="term" value="F:3-phosphoshikimate 1-carboxyvinyltransferase activity"/>
    <property type="evidence" value="ECO:0007669"/>
    <property type="project" value="UniProtKB-UniRule"/>
</dbReference>
<dbReference type="GO" id="GO:0008652">
    <property type="term" value="P:amino acid biosynthetic process"/>
    <property type="evidence" value="ECO:0007669"/>
    <property type="project" value="UniProtKB-KW"/>
</dbReference>
<dbReference type="GO" id="GO:0009073">
    <property type="term" value="P:aromatic amino acid family biosynthetic process"/>
    <property type="evidence" value="ECO:0007669"/>
    <property type="project" value="UniProtKB-KW"/>
</dbReference>
<dbReference type="GO" id="GO:0009423">
    <property type="term" value="P:chorismate biosynthetic process"/>
    <property type="evidence" value="ECO:0007669"/>
    <property type="project" value="UniProtKB-UniRule"/>
</dbReference>
<dbReference type="CDD" id="cd01556">
    <property type="entry name" value="EPSP_synthase"/>
    <property type="match status" value="1"/>
</dbReference>
<dbReference type="Gene3D" id="3.65.10.10">
    <property type="entry name" value="Enolpyruvate transferase domain"/>
    <property type="match status" value="2"/>
</dbReference>
<dbReference type="HAMAP" id="MF_00210">
    <property type="entry name" value="EPSP_synth"/>
    <property type="match status" value="1"/>
</dbReference>
<dbReference type="InterPro" id="IPR001986">
    <property type="entry name" value="Enolpyruvate_Tfrase_dom"/>
</dbReference>
<dbReference type="InterPro" id="IPR036968">
    <property type="entry name" value="Enolpyruvate_Tfrase_sf"/>
</dbReference>
<dbReference type="InterPro" id="IPR006264">
    <property type="entry name" value="EPSP_synthase"/>
</dbReference>
<dbReference type="InterPro" id="IPR013792">
    <property type="entry name" value="RNA3'P_cycl/enolpyr_Trfase_a/b"/>
</dbReference>
<dbReference type="NCBIfam" id="TIGR01356">
    <property type="entry name" value="aroA"/>
    <property type="match status" value="1"/>
</dbReference>
<dbReference type="PANTHER" id="PTHR21090">
    <property type="entry name" value="AROM/DEHYDROQUINATE SYNTHASE"/>
    <property type="match status" value="1"/>
</dbReference>
<dbReference type="PANTHER" id="PTHR21090:SF5">
    <property type="entry name" value="PENTAFUNCTIONAL AROM POLYPEPTIDE"/>
    <property type="match status" value="1"/>
</dbReference>
<dbReference type="Pfam" id="PF00275">
    <property type="entry name" value="EPSP_synthase"/>
    <property type="match status" value="1"/>
</dbReference>
<dbReference type="PIRSF" id="PIRSF000505">
    <property type="entry name" value="EPSPS"/>
    <property type="match status" value="1"/>
</dbReference>
<dbReference type="SUPFAM" id="SSF55205">
    <property type="entry name" value="EPT/RTPC-like"/>
    <property type="match status" value="1"/>
</dbReference>
<comment type="function">
    <text evidence="1">Catalyzes the transfer of the enolpyruvyl moiety of phosphoenolpyruvate (PEP) to the 5-hydroxyl of shikimate-3-phosphate (S3P) to produce enolpyruvyl shikimate-3-phosphate and inorganic phosphate.</text>
</comment>
<comment type="catalytic activity">
    <reaction evidence="1">
        <text>3-phosphoshikimate + phosphoenolpyruvate = 5-O-(1-carboxyvinyl)-3-phosphoshikimate + phosphate</text>
        <dbReference type="Rhea" id="RHEA:21256"/>
        <dbReference type="ChEBI" id="CHEBI:43474"/>
        <dbReference type="ChEBI" id="CHEBI:57701"/>
        <dbReference type="ChEBI" id="CHEBI:58702"/>
        <dbReference type="ChEBI" id="CHEBI:145989"/>
        <dbReference type="EC" id="2.5.1.19"/>
    </reaction>
    <physiologicalReaction direction="left-to-right" evidence="1">
        <dbReference type="Rhea" id="RHEA:21257"/>
    </physiologicalReaction>
</comment>
<comment type="pathway">
    <text evidence="1">Metabolic intermediate biosynthesis; chorismate biosynthesis.</text>
</comment>
<comment type="subunit">
    <text evidence="1">Monomer.</text>
</comment>
<comment type="subcellular location">
    <subcellularLocation>
        <location evidence="1">Cytoplasm</location>
    </subcellularLocation>
</comment>
<comment type="similarity">
    <text evidence="1">Belongs to the EPSP synthase family.</text>
</comment>
<proteinExistence type="inferred from homology"/>
<evidence type="ECO:0000255" key="1">
    <source>
        <dbReference type="HAMAP-Rule" id="MF_00210"/>
    </source>
</evidence>
<protein>
    <recommendedName>
        <fullName evidence="1">3-phosphoshikimate 1-carboxyvinyltransferase</fullName>
        <ecNumber evidence="1">2.5.1.19</ecNumber>
    </recommendedName>
    <alternativeName>
        <fullName evidence="1">5-enolpyruvylshikimate-3-phosphate synthase</fullName>
        <shortName evidence="1">EPSP synthase</shortName>
        <shortName evidence="1">EPSPS</shortName>
    </alternativeName>
</protein>
<sequence>MIVRINKSVAFGSVKAPRSKSWAIRLILLSAISDEETTICSIPDSDDTEAALRMIEVLGSKVIRQGNCIRVIPNLRQCGGYVNVGGSGTVMRLGVALASSCRNPVIIDGDETLKRRPIRELLESLRSLGVNVNGDSLPVAINGPVKGNYVEIRGDLTSQYISGLIMLGLVSGITIRVIGDLVSRQYVDLTRRIIEESGCSVGVSNDVITVNECIPRISLSNVPGDYALSGFYTALALATGGLVTVTGLPKPLGYGDDSLVNIFSNAGARSVFSNGDWSVEGGGELRGIVVDLKDSPDLAPVVASIAPFASGETVITGVRHLAFKESNRLETISDSLRAFGVNVNHGDDSLRISGSITHGALIKCPNDHRIAMMSGVVAAGSNGESIIHNAECVNKSNRLFWRDLVKLGVKLTIN</sequence>
<name>AROA_CALMQ</name>
<accession>A8MB38</accession>
<reference key="1">
    <citation type="submission" date="2007-10" db="EMBL/GenBank/DDBJ databases">
        <title>Complete sequence of Caldivirga maquilingensis IC-167.</title>
        <authorList>
            <consortium name="US DOE Joint Genome Institute"/>
            <person name="Copeland A."/>
            <person name="Lucas S."/>
            <person name="Lapidus A."/>
            <person name="Barry K."/>
            <person name="Glavina del Rio T."/>
            <person name="Dalin E."/>
            <person name="Tice H."/>
            <person name="Pitluck S."/>
            <person name="Saunders E."/>
            <person name="Brettin T."/>
            <person name="Bruce D."/>
            <person name="Detter J.C."/>
            <person name="Han C."/>
            <person name="Schmutz J."/>
            <person name="Larimer F."/>
            <person name="Land M."/>
            <person name="Hauser L."/>
            <person name="Kyrpides N."/>
            <person name="Ivanova N."/>
            <person name="Biddle J.F."/>
            <person name="Zhang Z."/>
            <person name="Fitz-Gibbon S.T."/>
            <person name="Lowe T.M."/>
            <person name="Saltikov C."/>
            <person name="House C.H."/>
            <person name="Richardson P."/>
        </authorList>
    </citation>
    <scope>NUCLEOTIDE SEQUENCE [LARGE SCALE GENOMIC DNA]</scope>
    <source>
        <strain>ATCC 700844 / DSM 13496 / JCM 10307 / IC-167</strain>
    </source>
</reference>
<keyword id="KW-0028">Amino-acid biosynthesis</keyword>
<keyword id="KW-0057">Aromatic amino acid biosynthesis</keyword>
<keyword id="KW-0963">Cytoplasm</keyword>
<keyword id="KW-1185">Reference proteome</keyword>
<keyword id="KW-0808">Transferase</keyword>